<reference key="1">
    <citation type="journal article" date="2010" name="Appl. Environ. Microbiol.">
        <title>The genome sequence of Psychrobacter arcticus 273-4, a psychroactive Siberian permafrost bacterium, reveals mechanisms for adaptation to low-temperature growth.</title>
        <authorList>
            <person name="Ayala-del-Rio H.L."/>
            <person name="Chain P.S."/>
            <person name="Grzymski J.J."/>
            <person name="Ponder M.A."/>
            <person name="Ivanova N."/>
            <person name="Bergholz P.W."/>
            <person name="Di Bartolo G."/>
            <person name="Hauser L."/>
            <person name="Land M."/>
            <person name="Bakermans C."/>
            <person name="Rodrigues D."/>
            <person name="Klappenbach J."/>
            <person name="Zarka D."/>
            <person name="Larimer F."/>
            <person name="Richardson P."/>
            <person name="Murray A."/>
            <person name="Thomashow M."/>
            <person name="Tiedje J.M."/>
        </authorList>
    </citation>
    <scope>NUCLEOTIDE SEQUENCE [LARGE SCALE GENOMIC DNA]</scope>
    <source>
        <strain>DSM 17307 / VKM B-2377 / 273-4</strain>
    </source>
</reference>
<protein>
    <recommendedName>
        <fullName evidence="1">Ribosomal RNA small subunit methyltransferase J</fullName>
        <ecNumber evidence="1">2.1.1.242</ecNumber>
    </recommendedName>
    <alternativeName>
        <fullName evidence="1">16S rRNA m2G1516 methyltransferase</fullName>
    </alternativeName>
    <alternativeName>
        <fullName evidence="1">rRNA (guanine-N(2)-)-methyltransferase</fullName>
    </alternativeName>
</protein>
<feature type="chain" id="PRO_0000244279" description="Ribosomal RNA small subunit methyltransferase J">
    <location>
        <begin position="1"/>
        <end position="296"/>
    </location>
</feature>
<feature type="binding site" evidence="1">
    <location>
        <position position="205"/>
    </location>
    <ligand>
        <name>S-adenosyl-L-methionine</name>
        <dbReference type="ChEBI" id="CHEBI:59789"/>
    </ligand>
</feature>
<proteinExistence type="inferred from homology"/>
<comment type="function">
    <text evidence="1">Specifically methylates the guanosine in position 1516 of 16S rRNA.</text>
</comment>
<comment type="catalytic activity">
    <reaction evidence="1">
        <text>guanosine(1516) in 16S rRNA + S-adenosyl-L-methionine = N(2)-methylguanosine(1516) in 16S rRNA + S-adenosyl-L-homocysteine + H(+)</text>
        <dbReference type="Rhea" id="RHEA:43220"/>
        <dbReference type="Rhea" id="RHEA-COMP:10412"/>
        <dbReference type="Rhea" id="RHEA-COMP:10413"/>
        <dbReference type="ChEBI" id="CHEBI:15378"/>
        <dbReference type="ChEBI" id="CHEBI:57856"/>
        <dbReference type="ChEBI" id="CHEBI:59789"/>
        <dbReference type="ChEBI" id="CHEBI:74269"/>
        <dbReference type="ChEBI" id="CHEBI:74481"/>
        <dbReference type="EC" id="2.1.1.242"/>
    </reaction>
</comment>
<comment type="subcellular location">
    <subcellularLocation>
        <location evidence="1">Cytoplasm</location>
    </subcellularLocation>
</comment>
<comment type="similarity">
    <text evidence="1">Belongs to the methyltransferase superfamily. RsmJ family.</text>
</comment>
<sequence>MINAKQVPTADMSCQLLYISESQACQVYSLQALIAEHELSIILNVERYVDKLNQKRRQQLSQESTQPVLLLDDKNKLSWLSDGLSIAPEWDKLQRRVVSAGRKSELLLQATKMTADSKVIDATAGFGHDSLILASTGAQVTMLEQHPLMALLLLAEQQRMSTLPNWQKLMSRLHIINTDALSYFARFNNYLEADNEQAVDVVYLDPMFPEDSYQDSKTGKGAKVGKHMQALHQLVCPPTLDEEQKLLQSAQTFVSQQAQKQGRVIVKRPQFAPLLAHLEPSESWSNEAVRFDGYFV</sequence>
<dbReference type="EC" id="2.1.1.242" evidence="1"/>
<dbReference type="EMBL" id="CP000082">
    <property type="protein sequence ID" value="AAZ19552.1"/>
    <property type="molecule type" value="Genomic_DNA"/>
</dbReference>
<dbReference type="RefSeq" id="WP_011280966.1">
    <property type="nucleotide sequence ID" value="NC_007204.1"/>
</dbReference>
<dbReference type="SMR" id="Q4FR06"/>
<dbReference type="STRING" id="259536.Psyc_1704"/>
<dbReference type="KEGG" id="par:Psyc_1704"/>
<dbReference type="eggNOG" id="COG0742">
    <property type="taxonomic scope" value="Bacteria"/>
</dbReference>
<dbReference type="HOGENOM" id="CLU_076324_1_0_6"/>
<dbReference type="OrthoDB" id="3191794at2"/>
<dbReference type="Proteomes" id="UP000000546">
    <property type="component" value="Chromosome"/>
</dbReference>
<dbReference type="GO" id="GO:0005737">
    <property type="term" value="C:cytoplasm"/>
    <property type="evidence" value="ECO:0007669"/>
    <property type="project" value="UniProtKB-SubCell"/>
</dbReference>
<dbReference type="GO" id="GO:0008990">
    <property type="term" value="F:rRNA (guanine-N2-)-methyltransferase activity"/>
    <property type="evidence" value="ECO:0007669"/>
    <property type="project" value="UniProtKB-UniRule"/>
</dbReference>
<dbReference type="CDD" id="cd02440">
    <property type="entry name" value="AdoMet_MTases"/>
    <property type="match status" value="1"/>
</dbReference>
<dbReference type="Gene3D" id="3.40.50.150">
    <property type="entry name" value="Vaccinia Virus protein VP39"/>
    <property type="match status" value="1"/>
</dbReference>
<dbReference type="HAMAP" id="MF_01523">
    <property type="entry name" value="16SrRNA_methyltr_J"/>
    <property type="match status" value="1"/>
</dbReference>
<dbReference type="InterPro" id="IPR007536">
    <property type="entry name" value="16SrRNA_methylTrfase_J"/>
</dbReference>
<dbReference type="InterPro" id="IPR029063">
    <property type="entry name" value="SAM-dependent_MTases_sf"/>
</dbReference>
<dbReference type="PANTHER" id="PTHR36112">
    <property type="entry name" value="RIBOSOMAL RNA SMALL SUBUNIT METHYLTRANSFERASE J"/>
    <property type="match status" value="1"/>
</dbReference>
<dbReference type="PANTHER" id="PTHR36112:SF1">
    <property type="entry name" value="RIBOSOMAL RNA SMALL SUBUNIT METHYLTRANSFERASE J"/>
    <property type="match status" value="1"/>
</dbReference>
<dbReference type="Pfam" id="PF04445">
    <property type="entry name" value="SAM_MT"/>
    <property type="match status" value="1"/>
</dbReference>
<dbReference type="SUPFAM" id="SSF53335">
    <property type="entry name" value="S-adenosyl-L-methionine-dependent methyltransferases"/>
    <property type="match status" value="1"/>
</dbReference>
<gene>
    <name evidence="1" type="primary">rsmJ</name>
    <name type="ordered locus">Psyc_1704</name>
</gene>
<keyword id="KW-0963">Cytoplasm</keyword>
<keyword id="KW-0489">Methyltransferase</keyword>
<keyword id="KW-1185">Reference proteome</keyword>
<keyword id="KW-0698">rRNA processing</keyword>
<keyword id="KW-0949">S-adenosyl-L-methionine</keyword>
<keyword id="KW-0808">Transferase</keyword>
<accession>Q4FR06</accession>
<name>RSMJ_PSYA2</name>
<evidence type="ECO:0000255" key="1">
    <source>
        <dbReference type="HAMAP-Rule" id="MF_01523"/>
    </source>
</evidence>
<organism>
    <name type="scientific">Psychrobacter arcticus (strain DSM 17307 / VKM B-2377 / 273-4)</name>
    <dbReference type="NCBI Taxonomy" id="259536"/>
    <lineage>
        <taxon>Bacteria</taxon>
        <taxon>Pseudomonadati</taxon>
        <taxon>Pseudomonadota</taxon>
        <taxon>Gammaproteobacteria</taxon>
        <taxon>Moraxellales</taxon>
        <taxon>Moraxellaceae</taxon>
        <taxon>Psychrobacter</taxon>
    </lineage>
</organism>